<protein>
    <recommendedName>
        <fullName evidence="1">NADH-quinone oxidoreductase subunit C/D</fullName>
        <ecNumber evidence="1">7.1.1.-</ecNumber>
    </recommendedName>
    <alternativeName>
        <fullName evidence="1">NADH dehydrogenase I subunit C/D</fullName>
    </alternativeName>
    <alternativeName>
        <fullName evidence="1">NDH-1 subunit C/D</fullName>
    </alternativeName>
</protein>
<name>NUOCD_SHIF8</name>
<accession>Q0T2K1</accession>
<keyword id="KW-0997">Cell inner membrane</keyword>
<keyword id="KW-1003">Cell membrane</keyword>
<keyword id="KW-0472">Membrane</keyword>
<keyword id="KW-0511">Multifunctional enzyme</keyword>
<keyword id="KW-0520">NAD</keyword>
<keyword id="KW-0874">Quinone</keyword>
<keyword id="KW-1278">Translocase</keyword>
<keyword id="KW-0813">Transport</keyword>
<keyword id="KW-0830">Ubiquinone</keyword>
<proteinExistence type="inferred from homology"/>
<evidence type="ECO:0000255" key="1">
    <source>
        <dbReference type="HAMAP-Rule" id="MF_01359"/>
    </source>
</evidence>
<gene>
    <name evidence="1" type="primary">nuoC</name>
    <name evidence="1" type="synonym">nuoCD</name>
    <name evidence="1" type="synonym">nuoD</name>
    <name type="ordered locus">SFV_2353</name>
</gene>
<feature type="chain" id="PRO_0000358699" description="NADH-quinone oxidoreductase subunit C/D">
    <location>
        <begin position="1"/>
        <end position="596"/>
    </location>
</feature>
<feature type="region of interest" description="NADH dehydrogenase I subunit C" evidence="1">
    <location>
        <begin position="1"/>
        <end position="186"/>
    </location>
</feature>
<feature type="region of interest" description="NADH dehydrogenase I subunit D" evidence="1">
    <location>
        <begin position="210"/>
        <end position="596"/>
    </location>
</feature>
<sequence length="596" mass="68266">MTDLTAQEPAWQTRDHLDDPVIGELRNRFGPDAFTVQATRTGVPVVWIKREQLLEVGDFLKKLPKPYVMLFDLHGMDERLRTHREGLPAADFSVFYHLISIDRNRDIMLKVALAENDLHVPTFTKLFPNANWYERETWDLFGITFDGHPNLRRIMMPQTWKGHPLRKDYPARATEFSPFELTKAKQDLEMEALTFKPEEWGMKRGTENEDFMFLNLGPNHPSAHGAFRIVLQLDGEEIVDCVPDIGYHHRGAEKMGERQSWHSYIPYTDRIEYLGGCVNEMPYVLAVEKLAGITVPDRVNVIRVMLSELFRINSHLLYISTFIQDVGAMTPVFFAFTDRQKIYDLVEAITGFRMHPAWFRIGGVAHDLPRGWDRLLREFLDWMPKRLASYEKAALQNTILKGRSQGVAAYGAKEALEWGTTGAGLRATGIDFDVRKARPYSGYENFDFEIPVGGGVSDCYTRVMLKVEELRQSLRILEQCLNNMPEGPFKADHPLTTPPPKERTLQHIETLITHFLQVSWGPVMPANESFQMIEATKGINSYYLTSDGSTMSYRTRIRTPSYAHLQQIPAAIRGSLVSDLIVYLGSIDFVMSDVDR</sequence>
<comment type="function">
    <text evidence="1">NDH-1 shuttles electrons from NADH, via FMN and iron-sulfur (Fe-S) centers, to quinones in the respiratory chain. The immediate electron acceptor for the enzyme in this species is believed to be ubiquinone. Couples the redox reaction to proton translocation (for every two electrons transferred, four hydrogen ions are translocated across the cytoplasmic membrane), and thus conserves the redox energy in a proton gradient.</text>
</comment>
<comment type="catalytic activity">
    <reaction evidence="1">
        <text>a quinone + NADH + 5 H(+)(in) = a quinol + NAD(+) + 4 H(+)(out)</text>
        <dbReference type="Rhea" id="RHEA:57888"/>
        <dbReference type="ChEBI" id="CHEBI:15378"/>
        <dbReference type="ChEBI" id="CHEBI:24646"/>
        <dbReference type="ChEBI" id="CHEBI:57540"/>
        <dbReference type="ChEBI" id="CHEBI:57945"/>
        <dbReference type="ChEBI" id="CHEBI:132124"/>
    </reaction>
</comment>
<comment type="subunit">
    <text evidence="1">NDH-1 is composed of 13 different subunits. Subunits NuoB, CD, E, F, and G constitute the peripheral sector of the complex.</text>
</comment>
<comment type="subcellular location">
    <subcellularLocation>
        <location evidence="1">Cell inner membrane</location>
        <topology evidence="1">Peripheral membrane protein</topology>
        <orientation evidence="1">Cytoplasmic side</orientation>
    </subcellularLocation>
</comment>
<comment type="similarity">
    <text evidence="1">In the N-terminal section; belongs to the complex I 30 kDa subunit family.</text>
</comment>
<comment type="similarity">
    <text evidence="1">In the C-terminal section; belongs to the complex I 49 kDa subunit family.</text>
</comment>
<reference key="1">
    <citation type="journal article" date="2006" name="BMC Genomics">
        <title>Complete genome sequence of Shigella flexneri 5b and comparison with Shigella flexneri 2a.</title>
        <authorList>
            <person name="Nie H."/>
            <person name="Yang F."/>
            <person name="Zhang X."/>
            <person name="Yang J."/>
            <person name="Chen L."/>
            <person name="Wang J."/>
            <person name="Xiong Z."/>
            <person name="Peng J."/>
            <person name="Sun L."/>
            <person name="Dong J."/>
            <person name="Xue Y."/>
            <person name="Xu X."/>
            <person name="Chen S."/>
            <person name="Yao Z."/>
            <person name="Shen Y."/>
            <person name="Jin Q."/>
        </authorList>
    </citation>
    <scope>NUCLEOTIDE SEQUENCE [LARGE SCALE GENOMIC DNA]</scope>
    <source>
        <strain>8401</strain>
    </source>
</reference>
<dbReference type="EC" id="7.1.1.-" evidence="1"/>
<dbReference type="EMBL" id="CP000266">
    <property type="protein sequence ID" value="ABF04464.1"/>
    <property type="molecule type" value="Genomic_DNA"/>
</dbReference>
<dbReference type="SMR" id="Q0T2K1"/>
<dbReference type="KEGG" id="sfv:SFV_2353"/>
<dbReference type="HOGENOM" id="CLU_015134_3_2_6"/>
<dbReference type="Proteomes" id="UP000000659">
    <property type="component" value="Chromosome"/>
</dbReference>
<dbReference type="GO" id="GO:0030964">
    <property type="term" value="C:NADH dehydrogenase complex"/>
    <property type="evidence" value="ECO:0007669"/>
    <property type="project" value="InterPro"/>
</dbReference>
<dbReference type="GO" id="GO:0005886">
    <property type="term" value="C:plasma membrane"/>
    <property type="evidence" value="ECO:0007669"/>
    <property type="project" value="UniProtKB-SubCell"/>
</dbReference>
<dbReference type="GO" id="GO:0051287">
    <property type="term" value="F:NAD binding"/>
    <property type="evidence" value="ECO:0007669"/>
    <property type="project" value="InterPro"/>
</dbReference>
<dbReference type="GO" id="GO:0008137">
    <property type="term" value="F:NADH dehydrogenase (ubiquinone) activity"/>
    <property type="evidence" value="ECO:0007669"/>
    <property type="project" value="InterPro"/>
</dbReference>
<dbReference type="GO" id="GO:0050136">
    <property type="term" value="F:NADH:ubiquinone reductase (non-electrogenic) activity"/>
    <property type="evidence" value="ECO:0007669"/>
    <property type="project" value="UniProtKB-UniRule"/>
</dbReference>
<dbReference type="GO" id="GO:0048038">
    <property type="term" value="F:quinone binding"/>
    <property type="evidence" value="ECO:0007669"/>
    <property type="project" value="UniProtKB-KW"/>
</dbReference>
<dbReference type="FunFam" id="1.10.645.10:FF:000001">
    <property type="entry name" value="NADH-quinone oxidoreductase subunit C/D"/>
    <property type="match status" value="1"/>
</dbReference>
<dbReference type="FunFam" id="3.30.460.80:FF:000001">
    <property type="entry name" value="NADH-quinone oxidoreductase subunit C/D"/>
    <property type="match status" value="1"/>
</dbReference>
<dbReference type="Gene3D" id="1.10.645.10">
    <property type="entry name" value="Cytochrome-c3 Hydrogenase, chain B"/>
    <property type="match status" value="1"/>
</dbReference>
<dbReference type="Gene3D" id="3.30.460.80">
    <property type="entry name" value="NADH:ubiquinone oxidoreductase, 30kDa subunit"/>
    <property type="match status" value="1"/>
</dbReference>
<dbReference type="HAMAP" id="MF_01357">
    <property type="entry name" value="NDH1_NuoC"/>
    <property type="match status" value="1"/>
</dbReference>
<dbReference type="HAMAP" id="MF_01359">
    <property type="entry name" value="NDH1_NuoCD_1"/>
    <property type="match status" value="1"/>
</dbReference>
<dbReference type="HAMAP" id="MF_01358">
    <property type="entry name" value="NDH1_NuoD"/>
    <property type="match status" value="1"/>
</dbReference>
<dbReference type="InterPro" id="IPR010218">
    <property type="entry name" value="NADH_DH_suC"/>
</dbReference>
<dbReference type="InterPro" id="IPR023062">
    <property type="entry name" value="NADH_DH_suCD"/>
</dbReference>
<dbReference type="InterPro" id="IPR001135">
    <property type="entry name" value="NADH_Q_OxRdtase_suD"/>
</dbReference>
<dbReference type="InterPro" id="IPR037232">
    <property type="entry name" value="NADH_quin_OxRdtase_su_C/D-like"/>
</dbReference>
<dbReference type="InterPro" id="IPR001268">
    <property type="entry name" value="NADH_UbQ_OxRdtase_30kDa_su"/>
</dbReference>
<dbReference type="InterPro" id="IPR014029">
    <property type="entry name" value="NADH_UbQ_OxRdtase_49kDa_CS"/>
</dbReference>
<dbReference type="InterPro" id="IPR020396">
    <property type="entry name" value="NADH_UbQ_OxRdtase_CS"/>
</dbReference>
<dbReference type="InterPro" id="IPR022885">
    <property type="entry name" value="NDH1_su_D/H"/>
</dbReference>
<dbReference type="InterPro" id="IPR029014">
    <property type="entry name" value="NiFe-Hase_large"/>
</dbReference>
<dbReference type="NCBIfam" id="TIGR01961">
    <property type="entry name" value="NuoC_fam"/>
    <property type="match status" value="1"/>
</dbReference>
<dbReference type="NCBIfam" id="TIGR01962">
    <property type="entry name" value="NuoD"/>
    <property type="match status" value="1"/>
</dbReference>
<dbReference type="NCBIfam" id="NF004739">
    <property type="entry name" value="PRK06075.1"/>
    <property type="match status" value="1"/>
</dbReference>
<dbReference type="NCBIfam" id="NF008728">
    <property type="entry name" value="PRK11742.1"/>
    <property type="match status" value="1"/>
</dbReference>
<dbReference type="PANTHER" id="PTHR11993:SF45">
    <property type="entry name" value="NADH-QUINONE OXIDOREDUCTASE SUBUNIT C_D"/>
    <property type="match status" value="1"/>
</dbReference>
<dbReference type="PANTHER" id="PTHR11993">
    <property type="entry name" value="NADH-UBIQUINONE OXIDOREDUCTASE 49 KDA SUBUNIT"/>
    <property type="match status" value="1"/>
</dbReference>
<dbReference type="Pfam" id="PF00329">
    <property type="entry name" value="Complex1_30kDa"/>
    <property type="match status" value="1"/>
</dbReference>
<dbReference type="Pfam" id="PF00346">
    <property type="entry name" value="Complex1_49kDa"/>
    <property type="match status" value="1"/>
</dbReference>
<dbReference type="SUPFAM" id="SSF56762">
    <property type="entry name" value="HydB/Nqo4-like"/>
    <property type="match status" value="1"/>
</dbReference>
<dbReference type="SUPFAM" id="SSF143243">
    <property type="entry name" value="Nqo5-like"/>
    <property type="match status" value="1"/>
</dbReference>
<dbReference type="PROSITE" id="PS00542">
    <property type="entry name" value="COMPLEX1_30K"/>
    <property type="match status" value="1"/>
</dbReference>
<dbReference type="PROSITE" id="PS00535">
    <property type="entry name" value="COMPLEX1_49K"/>
    <property type="match status" value="1"/>
</dbReference>
<organism>
    <name type="scientific">Shigella flexneri serotype 5b (strain 8401)</name>
    <dbReference type="NCBI Taxonomy" id="373384"/>
    <lineage>
        <taxon>Bacteria</taxon>
        <taxon>Pseudomonadati</taxon>
        <taxon>Pseudomonadota</taxon>
        <taxon>Gammaproteobacteria</taxon>
        <taxon>Enterobacterales</taxon>
        <taxon>Enterobacteriaceae</taxon>
        <taxon>Shigella</taxon>
    </lineage>
</organism>